<protein>
    <recommendedName>
        <fullName evidence="1">Heme A synthase</fullName>
        <shortName evidence="1">HAS</shortName>
        <ecNumber evidence="1">1.17.99.9</ecNumber>
    </recommendedName>
    <alternativeName>
        <fullName evidence="1">Cytochrome aa3-controlling protein</fullName>
    </alternativeName>
</protein>
<proteinExistence type="inferred from homology"/>
<organism>
    <name type="scientific">Ehrlichia ruminantium (strain Gardel)</name>
    <dbReference type="NCBI Taxonomy" id="302409"/>
    <lineage>
        <taxon>Bacteria</taxon>
        <taxon>Pseudomonadati</taxon>
        <taxon>Pseudomonadota</taxon>
        <taxon>Alphaproteobacteria</taxon>
        <taxon>Rickettsiales</taxon>
        <taxon>Anaplasmataceae</taxon>
        <taxon>Ehrlichia</taxon>
    </lineage>
</organism>
<reference key="1">
    <citation type="journal article" date="2006" name="J. Bacteriol.">
        <title>Comparative genomic analysis of three strains of Ehrlichia ruminantium reveals an active process of genome size plasticity.</title>
        <authorList>
            <person name="Frutos R."/>
            <person name="Viari A."/>
            <person name="Ferraz C."/>
            <person name="Morgat A."/>
            <person name="Eychenie S."/>
            <person name="Kandassamy Y."/>
            <person name="Chantal I."/>
            <person name="Bensaid A."/>
            <person name="Coissac E."/>
            <person name="Vachiery N."/>
            <person name="Demaille J."/>
            <person name="Martinez D."/>
        </authorList>
    </citation>
    <scope>NUCLEOTIDE SEQUENCE [LARGE SCALE GENOMIC DNA]</scope>
    <source>
        <strain>Gardel</strain>
    </source>
</reference>
<gene>
    <name evidence="1" type="primary">ctaA</name>
    <name type="synonym">coxW</name>
    <name type="ordered locus">ERGA_CDS_07310</name>
</gene>
<keyword id="KW-1003">Cell membrane</keyword>
<keyword id="KW-0350">Heme biosynthesis</keyword>
<keyword id="KW-0408">Iron</keyword>
<keyword id="KW-0472">Membrane</keyword>
<keyword id="KW-0479">Metal-binding</keyword>
<keyword id="KW-0560">Oxidoreductase</keyword>
<keyword id="KW-0812">Transmembrane</keyword>
<keyword id="KW-1133">Transmembrane helix</keyword>
<dbReference type="EC" id="1.17.99.9" evidence="1"/>
<dbReference type="EMBL" id="CR925677">
    <property type="protein sequence ID" value="CAI28183.1"/>
    <property type="status" value="ALT_INIT"/>
    <property type="molecule type" value="Genomic_DNA"/>
</dbReference>
<dbReference type="RefSeq" id="WP_173358430.1">
    <property type="nucleotide sequence ID" value="NC_006831.1"/>
</dbReference>
<dbReference type="SMR" id="Q5FG54"/>
<dbReference type="KEGG" id="erg:ERGA_CDS_07310"/>
<dbReference type="HOGENOM" id="CLU_017627_0_0_5"/>
<dbReference type="UniPathway" id="UPA00269">
    <property type="reaction ID" value="UER00713"/>
</dbReference>
<dbReference type="Proteomes" id="UP000000533">
    <property type="component" value="Chromosome"/>
</dbReference>
<dbReference type="GO" id="GO:0005886">
    <property type="term" value="C:plasma membrane"/>
    <property type="evidence" value="ECO:0007669"/>
    <property type="project" value="UniProtKB-SubCell"/>
</dbReference>
<dbReference type="GO" id="GO:0046872">
    <property type="term" value="F:metal ion binding"/>
    <property type="evidence" value="ECO:0007669"/>
    <property type="project" value="UniProtKB-KW"/>
</dbReference>
<dbReference type="GO" id="GO:0016653">
    <property type="term" value="F:oxidoreductase activity, acting on NAD(P)H, heme protein as acceptor"/>
    <property type="evidence" value="ECO:0007669"/>
    <property type="project" value="InterPro"/>
</dbReference>
<dbReference type="GO" id="GO:0006784">
    <property type="term" value="P:heme A biosynthetic process"/>
    <property type="evidence" value="ECO:0007669"/>
    <property type="project" value="UniProtKB-UniRule"/>
</dbReference>
<dbReference type="HAMAP" id="MF_01665">
    <property type="entry name" value="HemeA_synth_type2"/>
    <property type="match status" value="1"/>
</dbReference>
<dbReference type="InterPro" id="IPR003780">
    <property type="entry name" value="COX15/CtaA_fam"/>
</dbReference>
<dbReference type="InterPro" id="IPR023754">
    <property type="entry name" value="HemeA_Synthase_type2"/>
</dbReference>
<dbReference type="PANTHER" id="PTHR23289">
    <property type="entry name" value="CYTOCHROME C OXIDASE ASSEMBLY PROTEIN COX15"/>
    <property type="match status" value="1"/>
</dbReference>
<dbReference type="PANTHER" id="PTHR23289:SF2">
    <property type="entry name" value="CYTOCHROME C OXIDASE ASSEMBLY PROTEIN COX15 HOMOLOG"/>
    <property type="match status" value="1"/>
</dbReference>
<dbReference type="Pfam" id="PF02628">
    <property type="entry name" value="COX15-CtaA"/>
    <property type="match status" value="1"/>
</dbReference>
<comment type="function">
    <text evidence="1">Catalyzes the conversion of heme O to heme A by two successive hydroxylations of the methyl group at C8. The first hydroxylation forms heme I, the second hydroxylation results in an unstable dihydroxymethyl group, which spontaneously dehydrates, resulting in the formyl group of heme A.</text>
</comment>
<comment type="catalytic activity">
    <reaction evidence="1">
        <text>Fe(II)-heme o + 2 A + H2O = Fe(II)-heme a + 2 AH2</text>
        <dbReference type="Rhea" id="RHEA:63388"/>
        <dbReference type="ChEBI" id="CHEBI:13193"/>
        <dbReference type="ChEBI" id="CHEBI:15377"/>
        <dbReference type="ChEBI" id="CHEBI:17499"/>
        <dbReference type="ChEBI" id="CHEBI:60530"/>
        <dbReference type="ChEBI" id="CHEBI:61715"/>
        <dbReference type="EC" id="1.17.99.9"/>
    </reaction>
    <physiologicalReaction direction="left-to-right" evidence="1">
        <dbReference type="Rhea" id="RHEA:63389"/>
    </physiologicalReaction>
</comment>
<comment type="cofactor">
    <cofactor evidence="1">
        <name>heme b</name>
        <dbReference type="ChEBI" id="CHEBI:60344"/>
    </cofactor>
</comment>
<comment type="pathway">
    <text evidence="1">Porphyrin-containing compound metabolism; heme A biosynthesis; heme A from heme O: step 1/1.</text>
</comment>
<comment type="subunit">
    <text evidence="1">Interacts with CtaB.</text>
</comment>
<comment type="subcellular location">
    <subcellularLocation>
        <location evidence="1">Cell membrane</location>
        <topology evidence="1">Multi-pass membrane protein</topology>
    </subcellularLocation>
</comment>
<comment type="similarity">
    <text evidence="1">Belongs to the COX15/CtaA family. Type 2 subfamily.</text>
</comment>
<comment type="sequence caution" evidence="2">
    <conflict type="erroneous initiation">
        <sequence resource="EMBL-CDS" id="CAI28183"/>
    </conflict>
</comment>
<feature type="chain" id="PRO_0000349032" description="Heme A synthase">
    <location>
        <begin position="1"/>
        <end position="347"/>
    </location>
</feature>
<feature type="transmembrane region" description="Helical" evidence="1">
    <location>
        <begin position="14"/>
        <end position="34"/>
    </location>
</feature>
<feature type="transmembrane region" description="Helical" evidence="1">
    <location>
        <begin position="96"/>
        <end position="116"/>
    </location>
</feature>
<feature type="transmembrane region" description="Helical" evidence="1">
    <location>
        <begin position="129"/>
        <end position="149"/>
    </location>
</feature>
<feature type="transmembrane region" description="Helical" evidence="1">
    <location>
        <begin position="162"/>
        <end position="182"/>
    </location>
</feature>
<feature type="transmembrane region" description="Helical" evidence="1">
    <location>
        <begin position="199"/>
        <end position="219"/>
    </location>
</feature>
<feature type="transmembrane region" description="Helical" evidence="1">
    <location>
        <begin position="260"/>
        <end position="280"/>
    </location>
</feature>
<feature type="transmembrane region" description="Helical" evidence="1">
    <location>
        <begin position="287"/>
        <end position="307"/>
    </location>
</feature>
<feature type="transmembrane region" description="Helical" evidence="1">
    <location>
        <begin position="311"/>
        <end position="331"/>
    </location>
</feature>
<feature type="binding site" description="axial binding residue" evidence="1">
    <location>
        <position position="262"/>
    </location>
    <ligand>
        <name>heme</name>
        <dbReference type="ChEBI" id="CHEBI:30413"/>
    </ligand>
    <ligandPart>
        <name>Fe</name>
        <dbReference type="ChEBI" id="CHEBI:18248"/>
    </ligandPart>
</feature>
<feature type="binding site" description="axial binding residue" evidence="1">
    <location>
        <position position="317"/>
    </location>
    <ligand>
        <name>heme</name>
        <dbReference type="ChEBI" id="CHEBI:30413"/>
    </ligand>
    <ligandPart>
        <name>Fe</name>
        <dbReference type="ChEBI" id="CHEBI:18248"/>
    </ligandPart>
</feature>
<evidence type="ECO:0000255" key="1">
    <source>
        <dbReference type="HAMAP-Rule" id="MF_01665"/>
    </source>
</evidence>
<evidence type="ECO:0000305" key="2"/>
<accession>Q5FG54</accession>
<name>CTAA_EHRRG</name>
<sequence>MNIINNSENVCTGVKIWLCICCIGILIMVFIGGITRLTHSGLSITEWNPVIGIFPPVTEKMWIAEKIKYMATPEYKYITSNITLTEFKKLYLIEYFHRLLGRIVGLVFLIPFLYFMYKQKLSKNLIHRFILIAFLILVQGVMGWYMVKSGLIDRPHVSHYRLAMHLLLALAIFYLLWKHFLLSVVHQIKCNIKVTNTSVFYIIISLITIQITCGALVAGLNAGLLSKDIPFLSDKVGLNDLLFIKPWWHNIYNNPITVQFIHEVIALLILIIAVITLLVLKVRIFPMYLLLALLLIQLTLGILTFIYNVPIILASLHQVTAFILFASSIYLLHYVKLLQIKYVENKI</sequence>